<name>ASC4_DIDFA</name>
<feature type="chain" id="PRO_0000448987" description="Esterase">
    <location>
        <begin position="1"/>
        <end position="270"/>
    </location>
</feature>
<feature type="active site" description="Charge relay system" evidence="1">
    <location>
        <position position="127"/>
    </location>
</feature>
<feature type="active site" description="Charge relay system" evidence="1">
    <location>
        <position position="216"/>
    </location>
</feature>
<feature type="active site" description="Charge relay system" evidence="1">
    <location>
        <position position="244"/>
    </location>
</feature>
<dbReference type="EC" id="3.1.2.-" evidence="5"/>
<dbReference type="EMBL" id="MN052625">
    <property type="protein sequence ID" value="QEN17972.1"/>
    <property type="molecule type" value="Genomic_DNA"/>
</dbReference>
<dbReference type="ESTHER" id="didfa-asc4">
    <property type="family name" value="FSH1"/>
</dbReference>
<dbReference type="GO" id="GO:0005737">
    <property type="term" value="C:cytoplasm"/>
    <property type="evidence" value="ECO:0007669"/>
    <property type="project" value="TreeGrafter"/>
</dbReference>
<dbReference type="GO" id="GO:0005634">
    <property type="term" value="C:nucleus"/>
    <property type="evidence" value="ECO:0007669"/>
    <property type="project" value="TreeGrafter"/>
</dbReference>
<dbReference type="GO" id="GO:0016787">
    <property type="term" value="F:hydrolase activity"/>
    <property type="evidence" value="ECO:0007669"/>
    <property type="project" value="UniProtKB-KW"/>
</dbReference>
<dbReference type="GO" id="GO:0044550">
    <property type="term" value="P:secondary metabolite biosynthetic process"/>
    <property type="evidence" value="ECO:0007669"/>
    <property type="project" value="TreeGrafter"/>
</dbReference>
<dbReference type="Gene3D" id="3.40.50.1820">
    <property type="entry name" value="alpha/beta hydrolase"/>
    <property type="match status" value="1"/>
</dbReference>
<dbReference type="InterPro" id="IPR029058">
    <property type="entry name" value="AB_hydrolase_fold"/>
</dbReference>
<dbReference type="InterPro" id="IPR005645">
    <property type="entry name" value="FSH-like_dom"/>
</dbReference>
<dbReference type="InterPro" id="IPR050593">
    <property type="entry name" value="LovG"/>
</dbReference>
<dbReference type="PANTHER" id="PTHR48070:SF3">
    <property type="entry name" value="ESTERASE DBAE-RELATED"/>
    <property type="match status" value="1"/>
</dbReference>
<dbReference type="PANTHER" id="PTHR48070">
    <property type="entry name" value="ESTERASE OVCA2"/>
    <property type="match status" value="1"/>
</dbReference>
<dbReference type="Pfam" id="PF03959">
    <property type="entry name" value="FSH1"/>
    <property type="match status" value="1"/>
</dbReference>
<dbReference type="SUPFAM" id="SSF53474">
    <property type="entry name" value="alpha/beta-Hydrolases"/>
    <property type="match status" value="1"/>
</dbReference>
<keyword id="KW-0378">Hydrolase</keyword>
<keyword id="KW-0843">Virulence</keyword>
<sequence length="270" mass="29361">MPSSEASPAAGLSEDSTRHLPRILCLHGGGTNARIFKAQCRQLSAQLKRDFRFIYAEAPWISIAGPDVLAVYGQWGPFKRWLRWSPEQPDITTQETVKELDQCLARAVEADNACGTTGEVVAILGFSQGAKVAASVLYWQQRSGQSLGLRASNSGYRFGVLLAGSSPLVDLSTCEGDSNGLSENAWPGDDMIGPRALDCDTHKLIIPTLHVHGLQDRGLRLHRALMEDFCAPESTTLIEWDGVHRVPLNRAEVSRVAGQIRKLAGLTSNS</sequence>
<evidence type="ECO:0000250" key="1">
    <source>
        <dbReference type="UniProtKB" id="P38777"/>
    </source>
</evidence>
<evidence type="ECO:0000269" key="2">
    <source>
    </source>
</evidence>
<evidence type="ECO:0000303" key="3">
    <source>
    </source>
</evidence>
<evidence type="ECO:0000305" key="4"/>
<evidence type="ECO:0000305" key="5">
    <source>
    </source>
</evidence>
<protein>
    <recommendedName>
        <fullName evidence="3">Esterase</fullName>
        <ecNumber evidence="5">3.1.2.-</ecNumber>
    </recommendedName>
    <alternativeName>
        <fullName evidence="3">Ascochitine biosynthesis cluster protein 4</fullName>
    </alternativeName>
</protein>
<gene>
    <name evidence="3" type="ORF">orf4</name>
</gene>
<organism>
    <name type="scientific">Didymella fabae</name>
    <name type="common">Leaf and pod spot disease fungus</name>
    <name type="synonym">Ascochyta fabae</name>
    <dbReference type="NCBI Taxonomy" id="372025"/>
    <lineage>
        <taxon>Eukaryota</taxon>
        <taxon>Fungi</taxon>
        <taxon>Dikarya</taxon>
        <taxon>Ascomycota</taxon>
        <taxon>Pezizomycotina</taxon>
        <taxon>Dothideomycetes</taxon>
        <taxon>Pleosporomycetidae</taxon>
        <taxon>Pleosporales</taxon>
        <taxon>Pleosporineae</taxon>
        <taxon>Didymellaceae</taxon>
        <taxon>Ascochyta</taxon>
    </lineage>
</organism>
<comment type="function">
    <text evidence="2 5">Esterase; part of the gene cluster that mediates the biosynthesis of the selective antifungal agent ascochitine, an o-quinone methide that plays a possible protective role against other microbial competitors in nature and is considered to be important for pathogenicity of legume-associated Didymella species (PubMed:31554725). The pathway probably begins with the synthesis of a keto-aldehyde intermediate by the ascochitine non-reducing polyketide synthase pksAC from successive condensations of 4 malonyl-CoA units, presumably with a simple acetyl-CoA starter unit (Probable). Release of the keto-aldehyde intermediate is consistent with the presence of the C-terminal reductive release domain (Probable). The HR-PKS (orf7) probably makes a diketide starter unit which is passed to the non-reducing polyketide synthase pksAC for further extension, producing ascochital and ascochitine (Probable). The aldehyde dehydrogenase (orf1), the 2-oxoglutarate-dependent dioxygenase (orf3) and the dehydrogenase (orf9) are probably involved in subsequent oxidations of methyl groups to the carboxylic acid of the heterocyclic ring (Probable). The ascochitine gene cluster also includes a gene encoding a short peptide with a cupin domain (orf2) that is often found in secondary metabolite gene clusters and which function has still to be determined (Probable).</text>
</comment>
<comment type="pathway">
    <text evidence="5">Mycotoxin biosynthesis.</text>
</comment>
<comment type="similarity">
    <text evidence="4">Belongs to the LovG family.</text>
</comment>
<accession>A0A5C1RHX3</accession>
<reference key="1">
    <citation type="journal article" date="2019" name="MSphere">
        <title>Identification of a polyketide synthase gene responsible for ascochitine biosynthesis in Ascochyta fabae and its abrogation in sister taxa.</title>
        <authorList>
            <person name="Kim W."/>
            <person name="Lichtenzveig J."/>
            <person name="Syme R.A."/>
            <person name="Williams A.H."/>
            <person name="Peever T.L."/>
            <person name="Chen W."/>
        </authorList>
    </citation>
    <scope>NUCLEOTIDE SEQUENCE [GENOMIC DNA]</scope>
    <scope>FUNCTION</scope>
    <source>
        <strain>AF247/15</strain>
    </source>
</reference>
<proteinExistence type="inferred from homology"/>